<accession>Q88VY7</accession>
<accession>F9UPL8</accession>
<gene>
    <name evidence="1" type="primary">scpA</name>
    <name type="ordered locus">lp_1890</name>
</gene>
<comment type="function">
    <text evidence="1">Participates in chromosomal partition during cell division. May act via the formation of a condensin-like complex containing Smc and ScpB that pull DNA away from mid-cell into both cell halves.</text>
</comment>
<comment type="subunit">
    <text evidence="1">Component of a cohesin-like complex composed of ScpA, ScpB and the Smc homodimer, in which ScpA and ScpB bind to the head domain of Smc. The presence of the three proteins is required for the association of the complex with DNA.</text>
</comment>
<comment type="subcellular location">
    <subcellularLocation>
        <location evidence="1">Cytoplasm</location>
    </subcellularLocation>
    <text evidence="1">Associated with two foci at the outer edges of the nucleoid region in young cells, and at four foci within both cell halves in older cells.</text>
</comment>
<comment type="similarity">
    <text evidence="1">Belongs to the ScpA family.</text>
</comment>
<name>SCPA_LACPL</name>
<feature type="chain" id="PRO_0000211087" description="Segregation and condensation protein A">
    <location>
        <begin position="1"/>
        <end position="255"/>
    </location>
</feature>
<dbReference type="EMBL" id="AL935263">
    <property type="protein sequence ID" value="CCC79157.1"/>
    <property type="molecule type" value="Genomic_DNA"/>
</dbReference>
<dbReference type="RefSeq" id="WP_003640597.1">
    <property type="nucleotide sequence ID" value="NC_004567.2"/>
</dbReference>
<dbReference type="RefSeq" id="YP_004889671.1">
    <property type="nucleotide sequence ID" value="NC_004567.2"/>
</dbReference>
<dbReference type="SMR" id="Q88VY7"/>
<dbReference type="STRING" id="220668.lp_1890"/>
<dbReference type="EnsemblBacteria" id="CCC79157">
    <property type="protein sequence ID" value="CCC79157"/>
    <property type="gene ID" value="lp_1890"/>
</dbReference>
<dbReference type="KEGG" id="lpl:lp_1890"/>
<dbReference type="PATRIC" id="fig|220668.9.peg.1593"/>
<dbReference type="eggNOG" id="COG1354">
    <property type="taxonomic scope" value="Bacteria"/>
</dbReference>
<dbReference type="HOGENOM" id="CLU_038686_3_1_9"/>
<dbReference type="OrthoDB" id="9811016at2"/>
<dbReference type="PhylomeDB" id="Q88VY7"/>
<dbReference type="Proteomes" id="UP000000432">
    <property type="component" value="Chromosome"/>
</dbReference>
<dbReference type="GO" id="GO:0005737">
    <property type="term" value="C:cytoplasm"/>
    <property type="evidence" value="ECO:0007669"/>
    <property type="project" value="UniProtKB-SubCell"/>
</dbReference>
<dbReference type="GO" id="GO:0051301">
    <property type="term" value="P:cell division"/>
    <property type="evidence" value="ECO:0007669"/>
    <property type="project" value="UniProtKB-KW"/>
</dbReference>
<dbReference type="GO" id="GO:0007059">
    <property type="term" value="P:chromosome segregation"/>
    <property type="evidence" value="ECO:0007669"/>
    <property type="project" value="UniProtKB-UniRule"/>
</dbReference>
<dbReference type="GO" id="GO:0006260">
    <property type="term" value="P:DNA replication"/>
    <property type="evidence" value="ECO:0007669"/>
    <property type="project" value="UniProtKB-UniRule"/>
</dbReference>
<dbReference type="Gene3D" id="6.10.250.2410">
    <property type="match status" value="1"/>
</dbReference>
<dbReference type="Gene3D" id="1.10.10.580">
    <property type="entry name" value="Structural maintenance of chromosome 1. Chain E"/>
    <property type="match status" value="1"/>
</dbReference>
<dbReference type="HAMAP" id="MF_01805">
    <property type="entry name" value="ScpA"/>
    <property type="match status" value="1"/>
</dbReference>
<dbReference type="InterPro" id="IPR003768">
    <property type="entry name" value="ScpA"/>
</dbReference>
<dbReference type="InterPro" id="IPR023093">
    <property type="entry name" value="ScpA-like_C"/>
</dbReference>
<dbReference type="PANTHER" id="PTHR33969">
    <property type="entry name" value="SEGREGATION AND CONDENSATION PROTEIN A"/>
    <property type="match status" value="1"/>
</dbReference>
<dbReference type="PANTHER" id="PTHR33969:SF2">
    <property type="entry name" value="SEGREGATION AND CONDENSATION PROTEIN A"/>
    <property type="match status" value="1"/>
</dbReference>
<dbReference type="Pfam" id="PF02616">
    <property type="entry name" value="SMC_ScpA"/>
    <property type="match status" value="1"/>
</dbReference>
<protein>
    <recommendedName>
        <fullName evidence="1">Segregation and condensation protein A</fullName>
    </recommendedName>
</protein>
<sequence length="255" mass="29190">MTNNQQQPITIKISEFEGPLDLLLHLIRQNKMDIYDIPIAAITQQYLDYLHSMRALKLDIAGDYLVMAATLMTIKSRFLLPQPEPDEMDEDNEDDDPRDSLVAELLAYKVYQEAAGELREKEQARHQHFTREAMLVPADLSAPKLTAGITLDDLQAAFRQLVAKRRRVRPLTKTVVAETINIDERMTQITTQLQHQPQGLDFADLFTVSASDEMLVTTFMAVLELTKQDQVALQQAEPLSPIHLYLRQDEQHDEH</sequence>
<proteinExistence type="inferred from homology"/>
<reference key="1">
    <citation type="journal article" date="2003" name="Proc. Natl. Acad. Sci. U.S.A.">
        <title>Complete genome sequence of Lactobacillus plantarum WCFS1.</title>
        <authorList>
            <person name="Kleerebezem M."/>
            <person name="Boekhorst J."/>
            <person name="van Kranenburg R."/>
            <person name="Molenaar D."/>
            <person name="Kuipers O.P."/>
            <person name="Leer R."/>
            <person name="Tarchini R."/>
            <person name="Peters S.A."/>
            <person name="Sandbrink H.M."/>
            <person name="Fiers M.W.E.J."/>
            <person name="Stiekema W."/>
            <person name="Klein Lankhorst R.M."/>
            <person name="Bron P.A."/>
            <person name="Hoffer S.M."/>
            <person name="Nierop Groot M.N."/>
            <person name="Kerkhoven R."/>
            <person name="De Vries M."/>
            <person name="Ursing B."/>
            <person name="De Vos W.M."/>
            <person name="Siezen R.J."/>
        </authorList>
    </citation>
    <scope>NUCLEOTIDE SEQUENCE [LARGE SCALE GENOMIC DNA]</scope>
    <source>
        <strain>ATCC BAA-793 / NCIMB 8826 / WCFS1</strain>
    </source>
</reference>
<reference key="2">
    <citation type="journal article" date="2012" name="J. Bacteriol.">
        <title>Complete resequencing and reannotation of the Lactobacillus plantarum WCFS1 genome.</title>
        <authorList>
            <person name="Siezen R.J."/>
            <person name="Francke C."/>
            <person name="Renckens B."/>
            <person name="Boekhorst J."/>
            <person name="Wels M."/>
            <person name="Kleerebezem M."/>
            <person name="van Hijum S.A."/>
        </authorList>
    </citation>
    <scope>NUCLEOTIDE SEQUENCE [LARGE SCALE GENOMIC DNA]</scope>
    <scope>GENOME REANNOTATION</scope>
    <source>
        <strain>ATCC BAA-793 / NCIMB 8826 / WCFS1</strain>
    </source>
</reference>
<evidence type="ECO:0000255" key="1">
    <source>
        <dbReference type="HAMAP-Rule" id="MF_01805"/>
    </source>
</evidence>
<organism>
    <name type="scientific">Lactiplantibacillus plantarum (strain ATCC BAA-793 / NCIMB 8826 / WCFS1)</name>
    <name type="common">Lactobacillus plantarum</name>
    <dbReference type="NCBI Taxonomy" id="220668"/>
    <lineage>
        <taxon>Bacteria</taxon>
        <taxon>Bacillati</taxon>
        <taxon>Bacillota</taxon>
        <taxon>Bacilli</taxon>
        <taxon>Lactobacillales</taxon>
        <taxon>Lactobacillaceae</taxon>
        <taxon>Lactiplantibacillus</taxon>
    </lineage>
</organism>
<keyword id="KW-0131">Cell cycle</keyword>
<keyword id="KW-0132">Cell division</keyword>
<keyword id="KW-0159">Chromosome partition</keyword>
<keyword id="KW-0963">Cytoplasm</keyword>
<keyword id="KW-1185">Reference proteome</keyword>